<dbReference type="EC" id="2.3.2.6"/>
<dbReference type="EMBL" id="AE016795">
    <property type="protein sequence ID" value="ABE68813.1"/>
    <property type="molecule type" value="Genomic_DNA"/>
</dbReference>
<dbReference type="RefSeq" id="WP_011080006.1">
    <property type="nucleotide sequence ID" value="NC_004459.3"/>
</dbReference>
<dbReference type="SMR" id="Q1RS89"/>
<dbReference type="KEGG" id="vvu:VV1_3222"/>
<dbReference type="HOGENOM" id="CLU_075045_0_0_6"/>
<dbReference type="Proteomes" id="UP000002275">
    <property type="component" value="Chromosome 1"/>
</dbReference>
<dbReference type="GO" id="GO:0005737">
    <property type="term" value="C:cytoplasm"/>
    <property type="evidence" value="ECO:0007669"/>
    <property type="project" value="UniProtKB-SubCell"/>
</dbReference>
<dbReference type="GO" id="GO:0008914">
    <property type="term" value="F:leucyl-tRNA--protein transferase activity"/>
    <property type="evidence" value="ECO:0007669"/>
    <property type="project" value="UniProtKB-UniRule"/>
</dbReference>
<dbReference type="GO" id="GO:0030163">
    <property type="term" value="P:protein catabolic process"/>
    <property type="evidence" value="ECO:0007669"/>
    <property type="project" value="UniProtKB-UniRule"/>
</dbReference>
<dbReference type="FunFam" id="3.30.70.3550:FF:000001">
    <property type="entry name" value="Leucyl/phenylalanyl-tRNA--protein transferase"/>
    <property type="match status" value="1"/>
</dbReference>
<dbReference type="Gene3D" id="3.40.630.70">
    <property type="entry name" value="Leucyl/phenylalanyl-tRNA-protein transferase, C-terminal domain"/>
    <property type="match status" value="1"/>
</dbReference>
<dbReference type="Gene3D" id="3.30.70.3550">
    <property type="entry name" value="Leucyl/phenylalanyl-tRNA-protein transferase, N-terminal domain"/>
    <property type="match status" value="1"/>
</dbReference>
<dbReference type="HAMAP" id="MF_00688">
    <property type="entry name" value="Leu_Phe_trans"/>
    <property type="match status" value="1"/>
</dbReference>
<dbReference type="InterPro" id="IPR016181">
    <property type="entry name" value="Acyl_CoA_acyltransferase"/>
</dbReference>
<dbReference type="InterPro" id="IPR004616">
    <property type="entry name" value="Leu/Phe-tRNA_Trfase"/>
</dbReference>
<dbReference type="InterPro" id="IPR042203">
    <property type="entry name" value="Leu/Phe-tRNA_Trfase_C"/>
</dbReference>
<dbReference type="InterPro" id="IPR042221">
    <property type="entry name" value="Leu/Phe-tRNA_Trfase_N"/>
</dbReference>
<dbReference type="NCBIfam" id="TIGR00667">
    <property type="entry name" value="aat"/>
    <property type="match status" value="1"/>
</dbReference>
<dbReference type="PANTHER" id="PTHR30098">
    <property type="entry name" value="LEUCYL/PHENYLALANYL-TRNA--PROTEIN TRANSFERASE"/>
    <property type="match status" value="1"/>
</dbReference>
<dbReference type="PANTHER" id="PTHR30098:SF2">
    <property type="entry name" value="LEUCYL_PHENYLALANYL-TRNA--PROTEIN TRANSFERASE"/>
    <property type="match status" value="1"/>
</dbReference>
<dbReference type="Pfam" id="PF03588">
    <property type="entry name" value="Leu_Phe_trans"/>
    <property type="match status" value="1"/>
</dbReference>
<dbReference type="SUPFAM" id="SSF55729">
    <property type="entry name" value="Acyl-CoA N-acyltransferases (Nat)"/>
    <property type="match status" value="1"/>
</dbReference>
<gene>
    <name type="primary">aat</name>
    <name type="ordered locus">VV1_3222</name>
</gene>
<reference key="1">
    <citation type="submission" date="2002-12" db="EMBL/GenBank/DDBJ databases">
        <title>Complete genome sequence of Vibrio vulnificus CMCP6.</title>
        <authorList>
            <person name="Rhee J.H."/>
            <person name="Kim S.Y."/>
            <person name="Chung S.S."/>
            <person name="Kim J.J."/>
            <person name="Moon Y.H."/>
            <person name="Jeong H."/>
            <person name="Choy H.E."/>
        </authorList>
    </citation>
    <scope>NUCLEOTIDE SEQUENCE [LARGE SCALE GENOMIC DNA]</scope>
    <source>
        <strain>CMCP6</strain>
    </source>
</reference>
<reference key="2">
    <citation type="submission" date="2006-04" db="EMBL/GenBank/DDBJ databases">
        <authorList>
            <person name="Rhee J.H."/>
            <person name="Kim S.Y."/>
            <person name="Chung S.S."/>
            <person name="Lee S.E."/>
            <person name="Choy H.E."/>
        </authorList>
    </citation>
    <scope>SEQUENCE REVISION</scope>
</reference>
<comment type="function">
    <text evidence="1">Functions in the N-end rule pathway of protein degradation where it conjugates Leu, Phe and, less efficiently, Met from aminoacyl-tRNAs to the N-termini of proteins containing an N-terminal arginine or lysine.</text>
</comment>
<comment type="catalytic activity">
    <reaction>
        <text>N-terminal L-lysyl-[protein] + L-leucyl-tRNA(Leu) = N-terminal L-leucyl-L-lysyl-[protein] + tRNA(Leu) + H(+)</text>
        <dbReference type="Rhea" id="RHEA:12340"/>
        <dbReference type="Rhea" id="RHEA-COMP:9613"/>
        <dbReference type="Rhea" id="RHEA-COMP:9622"/>
        <dbReference type="Rhea" id="RHEA-COMP:12670"/>
        <dbReference type="Rhea" id="RHEA-COMP:12671"/>
        <dbReference type="ChEBI" id="CHEBI:15378"/>
        <dbReference type="ChEBI" id="CHEBI:65249"/>
        <dbReference type="ChEBI" id="CHEBI:78442"/>
        <dbReference type="ChEBI" id="CHEBI:78494"/>
        <dbReference type="ChEBI" id="CHEBI:133043"/>
        <dbReference type="EC" id="2.3.2.6"/>
    </reaction>
</comment>
<comment type="catalytic activity">
    <reaction>
        <text>N-terminal L-arginyl-[protein] + L-leucyl-tRNA(Leu) = N-terminal L-leucyl-L-arginyl-[protein] + tRNA(Leu) + H(+)</text>
        <dbReference type="Rhea" id="RHEA:50416"/>
        <dbReference type="Rhea" id="RHEA-COMP:9613"/>
        <dbReference type="Rhea" id="RHEA-COMP:9622"/>
        <dbReference type="Rhea" id="RHEA-COMP:12672"/>
        <dbReference type="Rhea" id="RHEA-COMP:12673"/>
        <dbReference type="ChEBI" id="CHEBI:15378"/>
        <dbReference type="ChEBI" id="CHEBI:64719"/>
        <dbReference type="ChEBI" id="CHEBI:78442"/>
        <dbReference type="ChEBI" id="CHEBI:78494"/>
        <dbReference type="ChEBI" id="CHEBI:133044"/>
        <dbReference type="EC" id="2.3.2.6"/>
    </reaction>
</comment>
<comment type="catalytic activity">
    <reaction>
        <text>L-phenylalanyl-tRNA(Phe) + an N-terminal L-alpha-aminoacyl-[protein] = an N-terminal L-phenylalanyl-L-alpha-aminoacyl-[protein] + tRNA(Phe)</text>
        <dbReference type="Rhea" id="RHEA:43632"/>
        <dbReference type="Rhea" id="RHEA-COMP:9668"/>
        <dbReference type="Rhea" id="RHEA-COMP:9699"/>
        <dbReference type="Rhea" id="RHEA-COMP:10636"/>
        <dbReference type="Rhea" id="RHEA-COMP:10637"/>
        <dbReference type="ChEBI" id="CHEBI:78442"/>
        <dbReference type="ChEBI" id="CHEBI:78531"/>
        <dbReference type="ChEBI" id="CHEBI:78597"/>
        <dbReference type="ChEBI" id="CHEBI:83561"/>
        <dbReference type="EC" id="2.3.2.6"/>
    </reaction>
</comment>
<comment type="subcellular location">
    <subcellularLocation>
        <location evidence="1">Cytoplasm</location>
    </subcellularLocation>
</comment>
<comment type="similarity">
    <text evidence="2">Belongs to the L/F-transferase family.</text>
</comment>
<keyword id="KW-0012">Acyltransferase</keyword>
<keyword id="KW-0963">Cytoplasm</keyword>
<keyword id="KW-0808">Transferase</keyword>
<feature type="chain" id="PRO_0000289976" description="Leucyl/phenylalanyl-tRNA--protein transferase">
    <location>
        <begin position="1"/>
        <end position="237"/>
    </location>
</feature>
<proteinExistence type="inferred from homology"/>
<name>LFTR_VIBVU</name>
<accession>Q1RS89</accession>
<organism>
    <name type="scientific">Vibrio vulnificus (strain CMCP6)</name>
    <dbReference type="NCBI Taxonomy" id="216895"/>
    <lineage>
        <taxon>Bacteria</taxon>
        <taxon>Pseudomonadati</taxon>
        <taxon>Pseudomonadota</taxon>
        <taxon>Gammaproteobacteria</taxon>
        <taxon>Vibrionales</taxon>
        <taxon>Vibrionaceae</taxon>
        <taxon>Vibrio</taxon>
    </lineage>
</organism>
<evidence type="ECO:0000250" key="1"/>
<evidence type="ECO:0000305" key="2"/>
<protein>
    <recommendedName>
        <fullName>Leucyl/phenylalanyl-tRNA--protein transferase</fullName>
        <ecNumber>2.3.2.6</ecNumber>
    </recommendedName>
    <alternativeName>
        <fullName>L/F-transferase</fullName>
    </alternativeName>
    <alternativeName>
        <fullName>Leucyltransferase</fullName>
    </alternativeName>
    <alternativeName>
        <fullName>Phenyalanyltransferase</fullName>
    </alternativeName>
</protein>
<sequence>MAIYLTELDSKSLDFPPAENALADPNGLLAFGGDLTPERLIAAYHHGIFPWYGPGEPILWWSPSTRAVFDPNTFLPAKSLKKFQRKAQYQVSINHATPEVIKLCGNTRPAEETWLNEEMQAAYISLALQGVCHSVEVWQDQRLIGGFYGLSIGELFCGESMFSLETNASKIALWYFCRHFSEHGGKLIDCQVMNSHLHSLGAFTLPREEFLQRLLCLKQQRVTSGCFSPQWLKRHNA</sequence>